<name>Y3044_PYRAE</name>
<feature type="chain" id="PRO_0000121561" description="DNA-binding protein PAE3044">
    <location>
        <begin position="1"/>
        <end position="110"/>
    </location>
</feature>
<dbReference type="EMBL" id="AE009441">
    <property type="protein sequence ID" value="AAL64632.1"/>
    <property type="molecule type" value="Genomic_DNA"/>
</dbReference>
<dbReference type="RefSeq" id="WP_011009100.1">
    <property type="nucleotide sequence ID" value="NC_003364.1"/>
</dbReference>
<dbReference type="SMR" id="Q8ZTX7"/>
<dbReference type="FunCoup" id="Q8ZTX7">
    <property type="interactions" value="94"/>
</dbReference>
<dbReference type="STRING" id="178306.PAE3044"/>
<dbReference type="EnsemblBacteria" id="AAL64632">
    <property type="protein sequence ID" value="AAL64632"/>
    <property type="gene ID" value="PAE3044"/>
</dbReference>
<dbReference type="GeneID" id="1463801"/>
<dbReference type="KEGG" id="pai:PAE3044"/>
<dbReference type="PATRIC" id="fig|178306.9.peg.2290"/>
<dbReference type="eggNOG" id="arCOG04179">
    <property type="taxonomic scope" value="Archaea"/>
</dbReference>
<dbReference type="HOGENOM" id="CLU_122978_3_0_2"/>
<dbReference type="InParanoid" id="Q8ZTX7"/>
<dbReference type="Proteomes" id="UP000002439">
    <property type="component" value="Chromosome"/>
</dbReference>
<dbReference type="GO" id="GO:0005829">
    <property type="term" value="C:cytosol"/>
    <property type="evidence" value="ECO:0000318"/>
    <property type="project" value="GO_Central"/>
</dbReference>
<dbReference type="GO" id="GO:0003677">
    <property type="term" value="F:DNA binding"/>
    <property type="evidence" value="ECO:0007669"/>
    <property type="project" value="UniProtKB-UniRule"/>
</dbReference>
<dbReference type="FunFam" id="1.10.8.140:FF:000004">
    <property type="entry name" value="DNA-binding protein PAE3044"/>
    <property type="match status" value="1"/>
</dbReference>
<dbReference type="Gene3D" id="1.10.8.140">
    <property type="entry name" value="PDCD5-like"/>
    <property type="match status" value="1"/>
</dbReference>
<dbReference type="HAMAP" id="MF_00026">
    <property type="entry name" value="dsDNA_bind"/>
    <property type="match status" value="1"/>
</dbReference>
<dbReference type="InterPro" id="IPR022889">
    <property type="entry name" value="DNA_bind_arc"/>
</dbReference>
<dbReference type="InterPro" id="IPR002836">
    <property type="entry name" value="PDCD5-like"/>
</dbReference>
<dbReference type="InterPro" id="IPR036883">
    <property type="entry name" value="PDCD5-like_sf"/>
</dbReference>
<dbReference type="NCBIfam" id="NF003268">
    <property type="entry name" value="PRK04239.1"/>
    <property type="match status" value="1"/>
</dbReference>
<dbReference type="PANTHER" id="PTHR10840">
    <property type="entry name" value="PROGRAMMED CELL DEATH PROTEIN 5"/>
    <property type="match status" value="1"/>
</dbReference>
<dbReference type="PANTHER" id="PTHR10840:SF0">
    <property type="entry name" value="PROGRAMMED CELL DEATH PROTEIN 5"/>
    <property type="match status" value="1"/>
</dbReference>
<dbReference type="Pfam" id="PF01984">
    <property type="entry name" value="dsDNA_bind"/>
    <property type="match status" value="1"/>
</dbReference>
<dbReference type="PIRSF" id="PIRSF015730">
    <property type="entry name" value="TFAR19"/>
    <property type="match status" value="1"/>
</dbReference>
<dbReference type="SUPFAM" id="SSF46950">
    <property type="entry name" value="Double-stranded DNA-binding domain"/>
    <property type="match status" value="1"/>
</dbReference>
<organism>
    <name type="scientific">Pyrobaculum aerophilum (strain ATCC 51768 / DSM 7523 / JCM 9630 / CIP 104966 / NBRC 100827 / IM2)</name>
    <dbReference type="NCBI Taxonomy" id="178306"/>
    <lineage>
        <taxon>Archaea</taxon>
        <taxon>Thermoproteota</taxon>
        <taxon>Thermoprotei</taxon>
        <taxon>Thermoproteales</taxon>
        <taxon>Thermoproteaceae</taxon>
        <taxon>Pyrobaculum</taxon>
    </lineage>
</organism>
<evidence type="ECO:0000255" key="1">
    <source>
        <dbReference type="HAMAP-Rule" id="MF_00026"/>
    </source>
</evidence>
<proteinExistence type="inferred from homology"/>
<sequence>MSEGSFEDRELEEIRRKKLEELQKKAELERQAQIVAAQRRIALKKILTPEALARLDNIRVVRPELAEALEQQLINLAATGRVRVPIDEETLKKILEAVYSQTRREYRFRL</sequence>
<keyword id="KW-0238">DNA-binding</keyword>
<keyword id="KW-1185">Reference proteome</keyword>
<gene>
    <name type="ordered locus">PAE3044</name>
</gene>
<accession>Q8ZTX7</accession>
<comment type="similarity">
    <text evidence="1">Belongs to the PDCD5 family.</text>
</comment>
<protein>
    <recommendedName>
        <fullName evidence="1">DNA-binding protein PAE3044</fullName>
    </recommendedName>
</protein>
<reference key="1">
    <citation type="journal article" date="2002" name="Proc. Natl. Acad. Sci. U.S.A.">
        <title>Genome sequence of the hyperthermophilic crenarchaeon Pyrobaculum aerophilum.</title>
        <authorList>
            <person name="Fitz-Gibbon S.T."/>
            <person name="Ladner H."/>
            <person name="Kim U.-J."/>
            <person name="Stetter K.O."/>
            <person name="Simon M.I."/>
            <person name="Miller J.H."/>
        </authorList>
    </citation>
    <scope>NUCLEOTIDE SEQUENCE [LARGE SCALE GENOMIC DNA]</scope>
    <source>
        <strain>ATCC 51768 / DSM 7523 / JCM 9630 / CIP 104966 / NBRC 100827 / IM2</strain>
    </source>
</reference>